<reference key="1">
    <citation type="journal article" date="1993" name="J. Mol. Biol.">
        <title>The gene locus of the proton-translocating NADH: ubiquinone oxidoreductase in Escherichia coli. Organization of the 14 genes and relationship between the derived proteins and subunits of mitochondrial complex I.</title>
        <authorList>
            <person name="Weidner U."/>
            <person name="Geier S."/>
            <person name="Ptock A."/>
            <person name="Friedrich T."/>
            <person name="Leif H."/>
            <person name="Weiss H."/>
        </authorList>
    </citation>
    <scope>NUCLEOTIDE SEQUENCE [GENOMIC DNA]</scope>
    <source>
        <strain>K12 / AN387</strain>
    </source>
</reference>
<reference key="2">
    <citation type="journal article" date="1997" name="DNA Res.">
        <title>Construction of a contiguous 874-kb sequence of the Escherichia coli-K12 genome corresponding to 50.0-68.8 min on the linkage map and analysis of its sequence features.</title>
        <authorList>
            <person name="Yamamoto Y."/>
            <person name="Aiba H."/>
            <person name="Baba T."/>
            <person name="Hayashi K."/>
            <person name="Inada T."/>
            <person name="Isono K."/>
            <person name="Itoh T."/>
            <person name="Kimura S."/>
            <person name="Kitagawa M."/>
            <person name="Makino K."/>
            <person name="Miki T."/>
            <person name="Mitsuhashi N."/>
            <person name="Mizobuchi K."/>
            <person name="Mori H."/>
            <person name="Nakade S."/>
            <person name="Nakamura Y."/>
            <person name="Nashimoto H."/>
            <person name="Oshima T."/>
            <person name="Oyama S."/>
            <person name="Saito N."/>
            <person name="Sampei G."/>
            <person name="Satoh Y."/>
            <person name="Sivasundaram S."/>
            <person name="Tagami H."/>
            <person name="Takahashi H."/>
            <person name="Takeda J."/>
            <person name="Takemoto K."/>
            <person name="Uehara K."/>
            <person name="Wada C."/>
            <person name="Yamagata S."/>
            <person name="Horiuchi T."/>
        </authorList>
    </citation>
    <scope>NUCLEOTIDE SEQUENCE [LARGE SCALE GENOMIC DNA]</scope>
    <source>
        <strain>K12 / W3110 / ATCC 27325 / DSM 5911</strain>
    </source>
</reference>
<reference key="3">
    <citation type="journal article" date="1997" name="Science">
        <title>The complete genome sequence of Escherichia coli K-12.</title>
        <authorList>
            <person name="Blattner F.R."/>
            <person name="Plunkett G. III"/>
            <person name="Bloch C.A."/>
            <person name="Perna N.T."/>
            <person name="Burland V."/>
            <person name="Riley M."/>
            <person name="Collado-Vides J."/>
            <person name="Glasner J.D."/>
            <person name="Rode C.K."/>
            <person name="Mayhew G.F."/>
            <person name="Gregor J."/>
            <person name="Davis N.W."/>
            <person name="Kirkpatrick H.A."/>
            <person name="Goeden M.A."/>
            <person name="Rose D.J."/>
            <person name="Mau B."/>
            <person name="Shao Y."/>
        </authorList>
    </citation>
    <scope>NUCLEOTIDE SEQUENCE [LARGE SCALE GENOMIC DNA]</scope>
    <source>
        <strain>K12 / MG1655 / ATCC 47076</strain>
    </source>
</reference>
<reference key="4">
    <citation type="journal article" date="2006" name="Mol. Syst. Biol.">
        <title>Highly accurate genome sequences of Escherichia coli K-12 strains MG1655 and W3110.</title>
        <authorList>
            <person name="Hayashi K."/>
            <person name="Morooka N."/>
            <person name="Yamamoto Y."/>
            <person name="Fujita K."/>
            <person name="Isono K."/>
            <person name="Choi S."/>
            <person name="Ohtsubo E."/>
            <person name="Baba T."/>
            <person name="Wanner B.L."/>
            <person name="Mori H."/>
            <person name="Horiuchi T."/>
        </authorList>
    </citation>
    <scope>NUCLEOTIDE SEQUENCE [LARGE SCALE GENOMIC DNA]</scope>
    <scope>SEQUENCE REVISION</scope>
    <source>
        <strain>K12 / W3110 / ATCC 27325 / DSM 5911</strain>
    </source>
</reference>
<reference key="5">
    <citation type="journal article" date="1997" name="Electrophoresis">
        <title>Comparing the predicted and observed properties of proteins encoded in the genome of Escherichia coli K-12.</title>
        <authorList>
            <person name="Link A.J."/>
            <person name="Robison K."/>
            <person name="Church G.M."/>
        </authorList>
    </citation>
    <scope>PROTEIN SEQUENCE OF 1-12</scope>
    <source>
        <strain>K12 / EMG2</strain>
    </source>
</reference>
<reference key="6">
    <citation type="journal article" date="1995" name="Eur. J. Biochem.">
        <title>Isolation and characterization of the proton-translocating NADH: ubiquinone oxidoreductase from Escherichia coli.</title>
        <authorList>
            <person name="Leif H."/>
            <person name="Sled V.D."/>
            <person name="Ohnishi T."/>
            <person name="Weiss H."/>
            <person name="Friedrich T."/>
        </authorList>
    </citation>
    <scope>PROTEIN SEQUENCE OF 1-6</scope>
</reference>
<dbReference type="EC" id="7.1.1.-" evidence="1"/>
<dbReference type="EMBL" id="X68301">
    <property type="protein sequence ID" value="CAA48361.1"/>
    <property type="molecule type" value="Genomic_DNA"/>
</dbReference>
<dbReference type="EMBL" id="U00096">
    <property type="protein sequence ID" value="AAC75347.1"/>
    <property type="molecule type" value="Genomic_DNA"/>
</dbReference>
<dbReference type="EMBL" id="AP009048">
    <property type="protein sequence ID" value="BAA16121.2"/>
    <property type="molecule type" value="Genomic_DNA"/>
</dbReference>
<dbReference type="PIR" id="E65000">
    <property type="entry name" value="E65000"/>
</dbReference>
<dbReference type="RefSeq" id="NP_416790.1">
    <property type="nucleotide sequence ID" value="NC_000913.3"/>
</dbReference>
<dbReference type="RefSeq" id="WP_000386733.1">
    <property type="nucleotide sequence ID" value="NZ_STEB01000008.1"/>
</dbReference>
<dbReference type="RefSeq" id="WP_046608242.1">
    <property type="nucleotide sequence ID" value="NZ_LN832404.1"/>
</dbReference>
<dbReference type="PDB" id="7AWT">
    <property type="method" value="EM"/>
    <property type="resolution" value="2.73 A"/>
    <property type="chains" value="B=1-220"/>
</dbReference>
<dbReference type="PDB" id="7NYR">
    <property type="method" value="EM"/>
    <property type="resolution" value="3.30 A"/>
    <property type="chains" value="B=1-220"/>
</dbReference>
<dbReference type="PDB" id="7NYU">
    <property type="method" value="EM"/>
    <property type="resolution" value="3.80 A"/>
    <property type="chains" value="B=1-220"/>
</dbReference>
<dbReference type="PDB" id="7NYV">
    <property type="method" value="EM"/>
    <property type="resolution" value="3.70 A"/>
    <property type="chains" value="B=1-220"/>
</dbReference>
<dbReference type="PDB" id="7NZ1">
    <property type="method" value="EM"/>
    <property type="resolution" value="2.10 A"/>
    <property type="chains" value="B=1-220"/>
</dbReference>
<dbReference type="PDB" id="7P61">
    <property type="method" value="EM"/>
    <property type="resolution" value="3.20 A"/>
    <property type="chains" value="B=1-220"/>
</dbReference>
<dbReference type="PDB" id="7P62">
    <property type="method" value="EM"/>
    <property type="resolution" value="3.60 A"/>
    <property type="chains" value="B=1-220"/>
</dbReference>
<dbReference type="PDB" id="7P63">
    <property type="method" value="EM"/>
    <property type="resolution" value="3.40 A"/>
    <property type="chains" value="B=1-220"/>
</dbReference>
<dbReference type="PDB" id="7P64">
    <property type="method" value="EM"/>
    <property type="resolution" value="2.50 A"/>
    <property type="chains" value="B=1-220"/>
</dbReference>
<dbReference type="PDB" id="7P69">
    <property type="method" value="EM"/>
    <property type="resolution" value="3.00 A"/>
    <property type="chains" value="B=1-220"/>
</dbReference>
<dbReference type="PDB" id="7P7C">
    <property type="method" value="EM"/>
    <property type="resolution" value="2.40 A"/>
    <property type="chains" value="B=1-220"/>
</dbReference>
<dbReference type="PDB" id="7P7E">
    <property type="method" value="EM"/>
    <property type="resolution" value="2.70 A"/>
    <property type="chains" value="B=1-220"/>
</dbReference>
<dbReference type="PDB" id="7P7J">
    <property type="method" value="EM"/>
    <property type="resolution" value="2.70 A"/>
    <property type="chains" value="B=1-220"/>
</dbReference>
<dbReference type="PDB" id="7P7K">
    <property type="method" value="EM"/>
    <property type="resolution" value="3.10 A"/>
    <property type="chains" value="B=1-220"/>
</dbReference>
<dbReference type="PDB" id="7P7L">
    <property type="method" value="EM"/>
    <property type="resolution" value="3.00 A"/>
    <property type="chains" value="B=1-220"/>
</dbReference>
<dbReference type="PDB" id="7P7M">
    <property type="method" value="EM"/>
    <property type="resolution" value="3.20 A"/>
    <property type="chains" value="B=1-220"/>
</dbReference>
<dbReference type="PDB" id="7Z7R">
    <property type="method" value="EM"/>
    <property type="resolution" value="3.36 A"/>
    <property type="chains" value="B=1-220"/>
</dbReference>
<dbReference type="PDB" id="7Z7S">
    <property type="method" value="EM"/>
    <property type="resolution" value="2.40 A"/>
    <property type="chains" value="B=1-220"/>
</dbReference>
<dbReference type="PDB" id="7Z7T">
    <property type="method" value="EM"/>
    <property type="resolution" value="3.10 A"/>
    <property type="chains" value="B=1-220"/>
</dbReference>
<dbReference type="PDB" id="7Z7V">
    <property type="method" value="EM"/>
    <property type="resolution" value="2.29 A"/>
    <property type="chains" value="B=1-220"/>
</dbReference>
<dbReference type="PDB" id="7Z80">
    <property type="method" value="EM"/>
    <property type="resolution" value="2.93 A"/>
    <property type="chains" value="B=1-220"/>
</dbReference>
<dbReference type="PDB" id="7Z83">
    <property type="method" value="EM"/>
    <property type="resolution" value="2.88 A"/>
    <property type="chains" value="B=1-220"/>
</dbReference>
<dbReference type="PDB" id="7Z84">
    <property type="method" value="EM"/>
    <property type="resolution" value="2.87 A"/>
    <property type="chains" value="B=1-220"/>
</dbReference>
<dbReference type="PDB" id="7ZC5">
    <property type="method" value="EM"/>
    <property type="resolution" value="3.00 A"/>
    <property type="chains" value="B=1-220"/>
</dbReference>
<dbReference type="PDB" id="7ZCI">
    <property type="method" value="EM"/>
    <property type="resolution" value="2.69 A"/>
    <property type="chains" value="B=1-220"/>
</dbReference>
<dbReference type="PDBsum" id="7AWT"/>
<dbReference type="PDBsum" id="7NYR"/>
<dbReference type="PDBsum" id="7NYU"/>
<dbReference type="PDBsum" id="7NYV"/>
<dbReference type="PDBsum" id="7NZ1"/>
<dbReference type="PDBsum" id="7P61"/>
<dbReference type="PDBsum" id="7P62"/>
<dbReference type="PDBsum" id="7P63"/>
<dbReference type="PDBsum" id="7P64"/>
<dbReference type="PDBsum" id="7P69"/>
<dbReference type="PDBsum" id="7P7C"/>
<dbReference type="PDBsum" id="7P7E"/>
<dbReference type="PDBsum" id="7P7J"/>
<dbReference type="PDBsum" id="7P7K"/>
<dbReference type="PDBsum" id="7P7L"/>
<dbReference type="PDBsum" id="7P7M"/>
<dbReference type="PDBsum" id="7Z7R"/>
<dbReference type="PDBsum" id="7Z7S"/>
<dbReference type="PDBsum" id="7Z7T"/>
<dbReference type="PDBsum" id="7Z7V"/>
<dbReference type="PDBsum" id="7Z80"/>
<dbReference type="PDBsum" id="7Z83"/>
<dbReference type="PDBsum" id="7Z84"/>
<dbReference type="PDBsum" id="7ZC5"/>
<dbReference type="PDBsum" id="7ZCI"/>
<dbReference type="EMDB" id="EMD-12653"/>
<dbReference type="EMDB" id="EMD-12654"/>
<dbReference type="EMDB" id="EMD-12655"/>
<dbReference type="EMDB" id="EMD-12661"/>
<dbReference type="SMR" id="P0AFC7"/>
<dbReference type="BioGRID" id="4262975">
    <property type="interactions" value="66"/>
</dbReference>
<dbReference type="ComplexPortal" id="CPX-243">
    <property type="entry name" value="Respiratory chain complex I"/>
</dbReference>
<dbReference type="FunCoup" id="P0AFC7">
    <property type="interactions" value="569"/>
</dbReference>
<dbReference type="IntAct" id="P0AFC7">
    <property type="interactions" value="1"/>
</dbReference>
<dbReference type="STRING" id="511145.b2287"/>
<dbReference type="TCDB" id="3.D.1.1.1">
    <property type="family name" value="the h+ or na+-translocating nadh dehydrogenase (ndh) family"/>
</dbReference>
<dbReference type="jPOST" id="P0AFC7"/>
<dbReference type="PaxDb" id="511145-b2287"/>
<dbReference type="EnsemblBacteria" id="AAC75347">
    <property type="protein sequence ID" value="AAC75347"/>
    <property type="gene ID" value="b2287"/>
</dbReference>
<dbReference type="GeneID" id="93774887"/>
<dbReference type="GeneID" id="946738"/>
<dbReference type="KEGG" id="ecj:JW5875"/>
<dbReference type="KEGG" id="eco:b2287"/>
<dbReference type="KEGG" id="ecoc:C3026_12760"/>
<dbReference type="PATRIC" id="fig|1411691.4.peg.4449"/>
<dbReference type="EchoBASE" id="EB2008"/>
<dbReference type="eggNOG" id="COG0377">
    <property type="taxonomic scope" value="Bacteria"/>
</dbReference>
<dbReference type="HOGENOM" id="CLU_055737_7_3_6"/>
<dbReference type="InParanoid" id="P0AFC7"/>
<dbReference type="OMA" id="CGGPYWE"/>
<dbReference type="OrthoDB" id="9786737at2"/>
<dbReference type="PhylomeDB" id="P0AFC7"/>
<dbReference type="BioCyc" id="EcoCyc:NUOB-MONOMER"/>
<dbReference type="BioCyc" id="MetaCyc:NUOB-MONOMER"/>
<dbReference type="PRO" id="PR:P0AFC7"/>
<dbReference type="Proteomes" id="UP000000625">
    <property type="component" value="Chromosome"/>
</dbReference>
<dbReference type="GO" id="GO:0016020">
    <property type="term" value="C:membrane"/>
    <property type="evidence" value="ECO:0000314"/>
    <property type="project" value="ComplexPortal"/>
</dbReference>
<dbReference type="GO" id="GO:0030964">
    <property type="term" value="C:NADH dehydrogenase complex"/>
    <property type="evidence" value="ECO:0000314"/>
    <property type="project" value="EcoliWiki"/>
</dbReference>
<dbReference type="GO" id="GO:0005886">
    <property type="term" value="C:plasma membrane"/>
    <property type="evidence" value="ECO:0000314"/>
    <property type="project" value="EcoliWiki"/>
</dbReference>
<dbReference type="GO" id="GO:0045271">
    <property type="term" value="C:respiratory chain complex I"/>
    <property type="evidence" value="ECO:0000314"/>
    <property type="project" value="EcoCyc"/>
</dbReference>
<dbReference type="GO" id="GO:0051539">
    <property type="term" value="F:4 iron, 4 sulfur cluster binding"/>
    <property type="evidence" value="ECO:0000315"/>
    <property type="project" value="EcoCyc"/>
</dbReference>
<dbReference type="GO" id="GO:0005506">
    <property type="term" value="F:iron ion binding"/>
    <property type="evidence" value="ECO:0007669"/>
    <property type="project" value="UniProtKB-UniRule"/>
</dbReference>
<dbReference type="GO" id="GO:0008137">
    <property type="term" value="F:NADH dehydrogenase (ubiquinone) activity"/>
    <property type="evidence" value="ECO:0007669"/>
    <property type="project" value="InterPro"/>
</dbReference>
<dbReference type="GO" id="GO:0050136">
    <property type="term" value="F:NADH:ubiquinone reductase (non-electrogenic) activity"/>
    <property type="evidence" value="ECO:0007669"/>
    <property type="project" value="UniProtKB-UniRule"/>
</dbReference>
<dbReference type="GO" id="GO:0048038">
    <property type="term" value="F:quinone binding"/>
    <property type="evidence" value="ECO:0007669"/>
    <property type="project" value="UniProtKB-KW"/>
</dbReference>
<dbReference type="GO" id="GO:0009060">
    <property type="term" value="P:aerobic respiration"/>
    <property type="evidence" value="ECO:0000315"/>
    <property type="project" value="EcoCyc"/>
</dbReference>
<dbReference type="GO" id="GO:0015990">
    <property type="term" value="P:electron transport coupled proton transport"/>
    <property type="evidence" value="ECO:0000315"/>
    <property type="project" value="EcoCyc"/>
</dbReference>
<dbReference type="GO" id="GO:0022904">
    <property type="term" value="P:respiratory electron transport chain"/>
    <property type="evidence" value="ECO:0000314"/>
    <property type="project" value="ComplexPortal"/>
</dbReference>
<dbReference type="FunFam" id="3.40.50.12280:FF:000002">
    <property type="entry name" value="NADH-quinone oxidoreductase subunit B"/>
    <property type="match status" value="1"/>
</dbReference>
<dbReference type="Gene3D" id="3.40.50.12280">
    <property type="match status" value="1"/>
</dbReference>
<dbReference type="HAMAP" id="MF_01356">
    <property type="entry name" value="NDH1_NuoB"/>
    <property type="match status" value="1"/>
</dbReference>
<dbReference type="InterPro" id="IPR006137">
    <property type="entry name" value="NADH_UbQ_OxRdtase-like_20kDa"/>
</dbReference>
<dbReference type="InterPro" id="IPR006138">
    <property type="entry name" value="NADH_UQ_OxRdtase_20Kd_su"/>
</dbReference>
<dbReference type="NCBIfam" id="TIGR01957">
    <property type="entry name" value="nuoB_fam"/>
    <property type="match status" value="1"/>
</dbReference>
<dbReference type="NCBIfam" id="NF005012">
    <property type="entry name" value="PRK06411.1"/>
    <property type="match status" value="1"/>
</dbReference>
<dbReference type="PANTHER" id="PTHR11995">
    <property type="entry name" value="NADH DEHYDROGENASE"/>
    <property type="match status" value="1"/>
</dbReference>
<dbReference type="PANTHER" id="PTHR11995:SF14">
    <property type="entry name" value="NADH DEHYDROGENASE [UBIQUINONE] IRON-SULFUR PROTEIN 7, MITOCHONDRIAL"/>
    <property type="match status" value="1"/>
</dbReference>
<dbReference type="Pfam" id="PF01058">
    <property type="entry name" value="Oxidored_q6"/>
    <property type="match status" value="1"/>
</dbReference>
<dbReference type="SUPFAM" id="SSF56770">
    <property type="entry name" value="HydA/Nqo6-like"/>
    <property type="match status" value="1"/>
</dbReference>
<dbReference type="PROSITE" id="PS01150">
    <property type="entry name" value="COMPLEX1_20K"/>
    <property type="match status" value="1"/>
</dbReference>
<organism>
    <name type="scientific">Escherichia coli (strain K12)</name>
    <dbReference type="NCBI Taxonomy" id="83333"/>
    <lineage>
        <taxon>Bacteria</taxon>
        <taxon>Pseudomonadati</taxon>
        <taxon>Pseudomonadota</taxon>
        <taxon>Gammaproteobacteria</taxon>
        <taxon>Enterobacterales</taxon>
        <taxon>Enterobacteriaceae</taxon>
        <taxon>Escherichia</taxon>
    </lineage>
</organism>
<comment type="function">
    <text>NDH-1 shuttles electrons from NADH, via FMN and iron-sulfur (Fe-S) centers, to quinones in the respiratory chain. The immediate electron acceptor for the enzyme in this species is ubiquinone. Couples the redox reaction to proton translocation (for every two electrons transferred, four hydrogen ions are translocated across the cytoplasmic membrane), and thus conserves the redox energy in a proton gradient.</text>
</comment>
<comment type="catalytic activity">
    <reaction evidence="1">
        <text>a quinone + NADH + 5 H(+)(in) = a quinol + NAD(+) + 4 H(+)(out)</text>
        <dbReference type="Rhea" id="RHEA:57888"/>
        <dbReference type="ChEBI" id="CHEBI:15378"/>
        <dbReference type="ChEBI" id="CHEBI:24646"/>
        <dbReference type="ChEBI" id="CHEBI:57540"/>
        <dbReference type="ChEBI" id="CHEBI:57945"/>
        <dbReference type="ChEBI" id="CHEBI:132124"/>
    </reaction>
</comment>
<comment type="cofactor">
    <cofactor evidence="1">
        <name>[4Fe-4S] cluster</name>
        <dbReference type="ChEBI" id="CHEBI:49883"/>
    </cofactor>
    <text evidence="1">Binds 1 [4Fe-4S] cluster.</text>
</comment>
<comment type="subunit">
    <text>NDH-1 is composed of 13 different subunits. Subunits NuoB, CD, E, F, and G constitute the peripheral sector of the complex.</text>
</comment>
<comment type="subcellular location">
    <subcellularLocation>
        <location>Cell inner membrane</location>
        <topology>Peripheral membrane protein</topology>
        <orientation>Cytoplasmic side</orientation>
    </subcellularLocation>
</comment>
<comment type="similarity">
    <text evidence="1">Belongs to the complex I 20 kDa subunit family.</text>
</comment>
<name>NUOB_ECOLI</name>
<gene>
    <name evidence="1" type="primary">nuoB</name>
    <name type="ordered locus">b2287</name>
    <name type="ordered locus">JW5875</name>
</gene>
<evidence type="ECO:0000255" key="1">
    <source>
        <dbReference type="HAMAP-Rule" id="MF_01356"/>
    </source>
</evidence>
<evidence type="ECO:0000305" key="2"/>
<evidence type="ECO:0007829" key="3">
    <source>
        <dbReference type="PDB" id="7AWT"/>
    </source>
</evidence>
<evidence type="ECO:0007829" key="4">
    <source>
        <dbReference type="PDB" id="7NZ1"/>
    </source>
</evidence>
<evidence type="ECO:0007829" key="5">
    <source>
        <dbReference type="PDB" id="7P61"/>
    </source>
</evidence>
<evidence type="ECO:0007829" key="6">
    <source>
        <dbReference type="PDB" id="7P7C"/>
    </source>
</evidence>
<evidence type="ECO:0007829" key="7">
    <source>
        <dbReference type="PDB" id="7P7M"/>
    </source>
</evidence>
<evidence type="ECO:0007829" key="8">
    <source>
        <dbReference type="PDB" id="7Z7S"/>
    </source>
</evidence>
<evidence type="ECO:0007829" key="9">
    <source>
        <dbReference type="PDB" id="7Z7V"/>
    </source>
</evidence>
<sequence length="220" mass="25056">MDYTLTRIDPNGENDRYPLQKQEIVTDPLEQEVNKNVFMGKLNDMVNWGRKNSIWPYNFGLSCCYVEMVTSFTAVHDVARFGAEVLRASPRQADLMVVAGTCFTKMAPVIQRLYDQMLEPKWVISMGACANSGGMYDIYSVVQGVDKFIPVDVYIPGCPPRPEAYMQALMLLQESIGKERRPLSWVVGDQGVYRANMQSERERKRGERIAVTNLRTPDEI</sequence>
<protein>
    <recommendedName>
        <fullName evidence="1">NADH-quinone oxidoreductase subunit B</fullName>
        <ecNumber evidence="1">7.1.1.-</ecNumber>
    </recommendedName>
    <alternativeName>
        <fullName evidence="1">NADH dehydrogenase I subunit B</fullName>
    </alternativeName>
    <alternativeName>
        <fullName evidence="1">NDH-1 subunit B</fullName>
    </alternativeName>
    <alternativeName>
        <fullName>NUO2</fullName>
    </alternativeName>
</protein>
<feature type="chain" id="PRO_0000118765" description="NADH-quinone oxidoreductase subunit B">
    <location>
        <begin position="1"/>
        <end position="220"/>
    </location>
</feature>
<feature type="binding site" evidence="1">
    <location>
        <position position="63"/>
    </location>
    <ligand>
        <name>[4Fe-4S] cluster</name>
        <dbReference type="ChEBI" id="CHEBI:49883"/>
    </ligand>
</feature>
<feature type="binding site" evidence="1">
    <location>
        <position position="64"/>
    </location>
    <ligand>
        <name>[4Fe-4S] cluster</name>
        <dbReference type="ChEBI" id="CHEBI:49883"/>
    </ligand>
</feature>
<feature type="binding site" evidence="1">
    <location>
        <position position="129"/>
    </location>
    <ligand>
        <name>[4Fe-4S] cluster</name>
        <dbReference type="ChEBI" id="CHEBI:49883"/>
    </ligand>
</feature>
<feature type="binding site" evidence="1">
    <location>
        <position position="158"/>
    </location>
    <ligand>
        <name>[4Fe-4S] cluster</name>
        <dbReference type="ChEBI" id="CHEBI:49883"/>
    </ligand>
</feature>
<feature type="sequence conflict" description="In Ref. 1; CAA48361." evidence="2" ref="1">
    <original>S</original>
    <variation>L</variation>
    <location>
        <position position="71"/>
    </location>
</feature>
<feature type="strand" evidence="9">
    <location>
        <begin position="3"/>
        <end position="6"/>
    </location>
</feature>
<feature type="strand" evidence="8">
    <location>
        <begin position="16"/>
        <end position="18"/>
    </location>
</feature>
<feature type="strand" evidence="8">
    <location>
        <begin position="20"/>
        <end position="25"/>
    </location>
</feature>
<feature type="helix" evidence="9">
    <location>
        <begin position="38"/>
        <end position="51"/>
    </location>
</feature>
<feature type="strand" evidence="4">
    <location>
        <begin position="56"/>
        <end position="58"/>
    </location>
</feature>
<feature type="strand" evidence="4">
    <location>
        <begin position="62"/>
        <end position="64"/>
    </location>
</feature>
<feature type="helix" evidence="4">
    <location>
        <begin position="65"/>
        <end position="70"/>
    </location>
</feature>
<feature type="helix" evidence="3">
    <location>
        <begin position="71"/>
        <end position="73"/>
    </location>
</feature>
<feature type="turn" evidence="9">
    <location>
        <begin position="74"/>
        <end position="76"/>
    </location>
</feature>
<feature type="helix" evidence="9">
    <location>
        <begin position="78"/>
        <end position="81"/>
    </location>
</feature>
<feature type="strand" evidence="9">
    <location>
        <begin position="87"/>
        <end position="89"/>
    </location>
</feature>
<feature type="helix" evidence="6">
    <location>
        <begin position="90"/>
        <end position="92"/>
    </location>
</feature>
<feature type="strand" evidence="4">
    <location>
        <begin position="94"/>
        <end position="98"/>
    </location>
</feature>
<feature type="turn" evidence="4">
    <location>
        <begin position="104"/>
        <end position="106"/>
    </location>
</feature>
<feature type="helix" evidence="4">
    <location>
        <begin position="107"/>
        <end position="116"/>
    </location>
</feature>
<feature type="strand" evidence="4">
    <location>
        <begin position="122"/>
        <end position="127"/>
    </location>
</feature>
<feature type="helix" evidence="4">
    <location>
        <begin position="128"/>
        <end position="131"/>
    </location>
</feature>
<feature type="strand" evidence="7">
    <location>
        <begin position="141"/>
        <end position="143"/>
    </location>
</feature>
<feature type="helix" evidence="4">
    <location>
        <begin position="145"/>
        <end position="147"/>
    </location>
</feature>
<feature type="strand" evidence="4">
    <location>
        <begin position="152"/>
        <end position="155"/>
    </location>
</feature>
<feature type="strand" evidence="4">
    <location>
        <begin position="157"/>
        <end position="159"/>
    </location>
</feature>
<feature type="helix" evidence="4">
    <location>
        <begin position="162"/>
        <end position="176"/>
    </location>
</feature>
<feature type="strand" evidence="5">
    <location>
        <begin position="178"/>
        <end position="180"/>
    </location>
</feature>
<feature type="strand" evidence="9">
    <location>
        <begin position="183"/>
        <end position="188"/>
    </location>
</feature>
<feature type="turn" evidence="4">
    <location>
        <begin position="193"/>
        <end position="197"/>
    </location>
</feature>
<feature type="helix" evidence="4">
    <location>
        <begin position="200"/>
        <end position="203"/>
    </location>
</feature>
<feature type="helix" evidence="4">
    <location>
        <begin position="205"/>
        <end position="209"/>
    </location>
</feature>
<keyword id="KW-0002">3D-structure</keyword>
<keyword id="KW-0004">4Fe-4S</keyword>
<keyword id="KW-0997">Cell inner membrane</keyword>
<keyword id="KW-1003">Cell membrane</keyword>
<keyword id="KW-0903">Direct protein sequencing</keyword>
<keyword id="KW-0408">Iron</keyword>
<keyword id="KW-0411">Iron-sulfur</keyword>
<keyword id="KW-0472">Membrane</keyword>
<keyword id="KW-0479">Metal-binding</keyword>
<keyword id="KW-0520">NAD</keyword>
<keyword id="KW-0874">Quinone</keyword>
<keyword id="KW-1185">Reference proteome</keyword>
<keyword id="KW-1278">Translocase</keyword>
<keyword id="KW-0813">Transport</keyword>
<keyword id="KW-0830">Ubiquinone</keyword>
<proteinExistence type="evidence at protein level"/>
<accession>P0AFC7</accession>
<accession>P33598</accession>
<accession>P78090</accession>
<accession>P78186</accession>
<accession>P78187</accession>